<sequence>MIDSTSHSNLRSKAFIFGPQDLSFDVRSFNKLHSQLQNHQWVLDALASLPKLWDNFAASDQKVQQSNTGKLLENLNAWISSGVAPEEAFPLPNVLLSPLVVIGQLVEYMTFLKAAFPDLGKKHDLPISIKEDTETFGLCTGTLCAFAVACSSNIADIQHYGAVAARLAMLVGAIVDTEEVLSDPEGKSVSFSASWNSAEFSDSFTHVLETFPDAYVSVIVDQRRATLTASKKTAPAIIERLKQEGAHVTSIALSGRFHWKKHQDAVSSLIQFCGLDPDLQLADATKMLLPSRSSSDGQYITTGKLHELALRAILLEQSEWYKTCRISYLSKFIMDDAAVICFGPERCMPPTLARKLGPRLTYVSEIDISSSRVPGQLLGGTQKLNLTDLPDERIAVIGMACRLPGAEDHEGFWEILKTGQSQHREVPEDRFGMATAWREADKRKWYGNFIDNYDTFDHKFFKKSPREMASTDPQHRLMLQVAYQAVEQSGYFRNNGTNRRIGCFMGVGNVDYEDNIACYPANAYSATGNLKSFLAGKISHHFGWTGPSLTLDTACSSSSVAIHQACRSILSGECNGALAGGVNVITSPNWYHNLAGASFLSPTGQCKPFDAKGDGYCRGEGVGAVFLKRLSSAIADGDQVFGVIASTKVYQNQNCTAITVPNAISLSELFTDVVRQARLEPKDITLVEAHGTGTAVGDPAEYDGIRAVFGGPIRSDVLSLGSVKGLVGHTECASGVVSLIKTLLMIQQGFIPPQASFSSINPSLNAKAEEKIEISTRLKPWDAPFRAALINNYGASGSNASMVVTQPPNLTETPSTPLPGKSYPFWISAFDQQSLQSYVRRLRQFLEKHAADKNLSVANLSFQVACQSNWSLPQALVFSASTKEELNRALASFEKGSTDFPSVQLPDPKPVILCFGGQVSTYVGLDQEVYNSTAILRHYLDQCDAMCLSLGLQSIYPAIFQRSPIEDIVQLQTALFAMQYSCAKAWIDSGLKVASVVGHSFGELIALCVSNAVSLKDAVKMISGRARLIKERWGADKGSMIAVEADLSDVEALLAKVKSQMGSETGLAIACYNASKSFTLAGPTKDVDHAENLLKNDPDFSGIRYKRLNVTNAFHSVLVDALIDDLESLGQGIRFKEPTIKLERATEQESTSTLNANYVATHMRKPVFFAQAVKRLSDKFPVAIWLEAGSNSTITAMASRALGTSNSSFQAVNITSEGAFRFLCDTTVKLWKEGQKVSFWAHHRLQTPMYTPVLLPPYQFEKSRHWMDLKVPPKPEASVQVAEQTAIIEAPKGLTTFVGYQDASQRSVRFRVNVTTEKFNRLLSGHIMANAAAVCPGMFQVEIALDALTSLRPEFQARSFIPELHDLRHYQPLVRDESRAVWIEAHCPNAEGLVWNWKLTASDDKGSGSVTHTSGTITFQAADSVQVKSEFEKLRRLIGRKRCLQLLDSNVADDILQGRNIYRAFTEVIDYKEIYRHVTKIAGRDNESAGRVIKTYDGETWLDTVLTDCFCQVAGIFVNLMTTKIDLSERGIFICDGIDRWLRAPNAGSNNTPSQVYEVFALHHCESDSKYLSDVFAFDAREGSLVEVALGISYQKVSISGIRRVLSKGMPAGLQPQVPTSPAAVAAIKTVSPPPVADSPLVDGSSTAVSGTPPTKKAPKAPSVDITGKMREIICNLSGLEPDEVKDDSDLVELGIDSLMSMELAREVDLAFKTTIDVTQLIDVTDFRSLVECMQRILGIDNQEDNTYLAEGLNGHEGVVTNGNAYHVNGTNGVVNGNGVLFPELGGSILPKSAILDAFRIAKEATDDFILNGQLGTYYNEVMPRSTELCVAHIVNAFEQLGCPIRSAAAYQRLERVPYLPKHERFMNLIYGLLEEARLIDINGSEITRTSVPVSTKSVETMLEELLHDEPLHAAEHKLTSLTGSKFADCITGKEDGLQLIFGSPEGREIVTDVYAKSPINAVWIQQAEFFLEQLVKRLPNTGEPLRILEMGAGTGGTTVKMLPLLERLGVPVEYTMTDLSSSLIAAARKRFKKYPFMKFKVVNIESPPDPQLVHSQHIILATNCVHATRNLEISTRNIHRILRPDGFLLLLEMTEQVPWVDFIFGLLEGWWLFEDGRRHALQPATHWKKILTSVGYGHVDWTEGTRPEANIQRLIIALASEPRYDHTPQSLQPPVQVPLTDIAGRQEIIDTYIREYTEDFRALPIPGIQQAVMPAPTGHCVLVTGATGSLGSHVVGYLSRLPNVHTVVCLNRRSTVPATIRQEEALKVRGISLDDNSRSKLVVLEVETAKPLLGLPVETYQKLVNTATHIVHSAWPMSLTRPIRGYESQFKVMQNLINLAREVAAWRPVPFKFSFQFISSIGVVGYYPLRYGEIIAPEETMTADSVLPVGYAEAKLVCERMLDETLHQYPDRFRPMAVRIAQIAGSTSNGHWNPVEHFAFLIKSSQTLKALPDFDGSLSWCPVDDVSATLGELLISNTTPYSIYHIENPSRQQWRKMVKTLAQSLDIPRDGIIPFDQWIERVRNSSASINDNPARQLLEFFDQHFIRMSCGNLILDTTKTREHSATLRERGPVGPGLVEKYISAWKTMGFLD</sequence>
<dbReference type="EC" id="2.3.1.-" evidence="11 12"/>
<dbReference type="EMBL" id="AB167465">
    <property type="protein sequence ID" value="BAD44749.1"/>
    <property type="status" value="ALT_SEQ"/>
    <property type="molecule type" value="Genomic_DNA"/>
</dbReference>
<dbReference type="PDB" id="5MPT">
    <property type="method" value="X-ray"/>
    <property type="resolution" value="1.65 A"/>
    <property type="chains" value="A=1785-2163"/>
</dbReference>
<dbReference type="PDBsum" id="5MPT"/>
<dbReference type="SMR" id="Q65Z23"/>
<dbReference type="GO" id="GO:0004315">
    <property type="term" value="F:3-oxoacyl-[acyl-carrier-protein] synthase activity"/>
    <property type="evidence" value="ECO:0007669"/>
    <property type="project" value="InterPro"/>
</dbReference>
<dbReference type="GO" id="GO:0008168">
    <property type="term" value="F:methyltransferase activity"/>
    <property type="evidence" value="ECO:0007669"/>
    <property type="project" value="UniProtKB-KW"/>
</dbReference>
<dbReference type="GO" id="GO:0031177">
    <property type="term" value="F:phosphopantetheine binding"/>
    <property type="evidence" value="ECO:0007669"/>
    <property type="project" value="InterPro"/>
</dbReference>
<dbReference type="GO" id="GO:0006633">
    <property type="term" value="P:fatty acid biosynthetic process"/>
    <property type="evidence" value="ECO:0007669"/>
    <property type="project" value="InterPro"/>
</dbReference>
<dbReference type="GO" id="GO:0032259">
    <property type="term" value="P:methylation"/>
    <property type="evidence" value="ECO:0007669"/>
    <property type="project" value="UniProtKB-KW"/>
</dbReference>
<dbReference type="CDD" id="cd02440">
    <property type="entry name" value="AdoMet_MTases"/>
    <property type="match status" value="1"/>
</dbReference>
<dbReference type="CDD" id="cd00833">
    <property type="entry name" value="PKS"/>
    <property type="match status" value="1"/>
</dbReference>
<dbReference type="Gene3D" id="3.30.70.3290">
    <property type="match status" value="1"/>
</dbReference>
<dbReference type="Gene3D" id="3.40.47.10">
    <property type="match status" value="1"/>
</dbReference>
<dbReference type="Gene3D" id="1.10.1200.10">
    <property type="entry name" value="ACP-like"/>
    <property type="match status" value="1"/>
</dbReference>
<dbReference type="Gene3D" id="3.40.366.10">
    <property type="entry name" value="Malonyl-Coenzyme A Acyl Carrier Protein, domain 2"/>
    <property type="match status" value="2"/>
</dbReference>
<dbReference type="Gene3D" id="3.40.50.720">
    <property type="entry name" value="NAD(P)-binding Rossmann-like Domain"/>
    <property type="match status" value="1"/>
</dbReference>
<dbReference type="Gene3D" id="3.10.129.110">
    <property type="entry name" value="Polyketide synthase dehydratase"/>
    <property type="match status" value="1"/>
</dbReference>
<dbReference type="Gene3D" id="3.40.50.150">
    <property type="entry name" value="Vaccinia Virus protein VP39"/>
    <property type="match status" value="1"/>
</dbReference>
<dbReference type="InterPro" id="IPR001227">
    <property type="entry name" value="Ac_transferase_dom_sf"/>
</dbReference>
<dbReference type="InterPro" id="IPR036736">
    <property type="entry name" value="ACP-like_sf"/>
</dbReference>
<dbReference type="InterPro" id="IPR014043">
    <property type="entry name" value="Acyl_transferase_dom"/>
</dbReference>
<dbReference type="InterPro" id="IPR016035">
    <property type="entry name" value="Acyl_Trfase/lysoPLipase"/>
</dbReference>
<dbReference type="InterPro" id="IPR013120">
    <property type="entry name" value="Far_NAD-bd"/>
</dbReference>
<dbReference type="InterPro" id="IPR018201">
    <property type="entry name" value="Ketoacyl_synth_AS"/>
</dbReference>
<dbReference type="InterPro" id="IPR014031">
    <property type="entry name" value="Ketoacyl_synth_C"/>
</dbReference>
<dbReference type="InterPro" id="IPR014030">
    <property type="entry name" value="Ketoacyl_synth_N"/>
</dbReference>
<dbReference type="InterPro" id="IPR016036">
    <property type="entry name" value="Malonyl_transacylase_ACP-bd"/>
</dbReference>
<dbReference type="InterPro" id="IPR013217">
    <property type="entry name" value="Methyltransf_12"/>
</dbReference>
<dbReference type="InterPro" id="IPR036291">
    <property type="entry name" value="NAD(P)-bd_dom_sf"/>
</dbReference>
<dbReference type="InterPro" id="IPR020841">
    <property type="entry name" value="PKS_Beta-ketoAc_synthase_dom"/>
</dbReference>
<dbReference type="InterPro" id="IPR042104">
    <property type="entry name" value="PKS_dehydratase_sf"/>
</dbReference>
<dbReference type="InterPro" id="IPR049900">
    <property type="entry name" value="PKS_mFAS_DH"/>
</dbReference>
<dbReference type="InterPro" id="IPR020806">
    <property type="entry name" value="PKS_PP-bd"/>
</dbReference>
<dbReference type="InterPro" id="IPR050444">
    <property type="entry name" value="Polyketide_Synthase"/>
</dbReference>
<dbReference type="InterPro" id="IPR009081">
    <property type="entry name" value="PP-bd_ACP"/>
</dbReference>
<dbReference type="InterPro" id="IPR006162">
    <property type="entry name" value="Ppantetheine_attach_site"/>
</dbReference>
<dbReference type="InterPro" id="IPR029063">
    <property type="entry name" value="SAM-dependent_MTases_sf"/>
</dbReference>
<dbReference type="InterPro" id="IPR032088">
    <property type="entry name" value="SAT"/>
</dbReference>
<dbReference type="InterPro" id="IPR016039">
    <property type="entry name" value="Thiolase-like"/>
</dbReference>
<dbReference type="PANTHER" id="PTHR45681:SF6">
    <property type="entry name" value="POLYKETIDE SYNTHASE 37"/>
    <property type="match status" value="1"/>
</dbReference>
<dbReference type="PANTHER" id="PTHR45681">
    <property type="entry name" value="POLYKETIDE SYNTHASE 44-RELATED"/>
    <property type="match status" value="1"/>
</dbReference>
<dbReference type="Pfam" id="PF00698">
    <property type="entry name" value="Acyl_transf_1"/>
    <property type="match status" value="1"/>
</dbReference>
<dbReference type="Pfam" id="PF18558">
    <property type="entry name" value="HTH_51"/>
    <property type="match status" value="1"/>
</dbReference>
<dbReference type="Pfam" id="PF00109">
    <property type="entry name" value="ketoacyl-synt"/>
    <property type="match status" value="1"/>
</dbReference>
<dbReference type="Pfam" id="PF02801">
    <property type="entry name" value="Ketoacyl-synt_C"/>
    <property type="match status" value="1"/>
</dbReference>
<dbReference type="Pfam" id="PF08242">
    <property type="entry name" value="Methyltransf_12"/>
    <property type="match status" value="1"/>
</dbReference>
<dbReference type="Pfam" id="PF07993">
    <property type="entry name" value="NAD_binding_4"/>
    <property type="match status" value="1"/>
</dbReference>
<dbReference type="Pfam" id="PF00550">
    <property type="entry name" value="PP-binding"/>
    <property type="match status" value="1"/>
</dbReference>
<dbReference type="Pfam" id="PF16073">
    <property type="entry name" value="SAT"/>
    <property type="match status" value="1"/>
</dbReference>
<dbReference type="SMART" id="SM00827">
    <property type="entry name" value="PKS_AT"/>
    <property type="match status" value="1"/>
</dbReference>
<dbReference type="SMART" id="SM00825">
    <property type="entry name" value="PKS_KS"/>
    <property type="match status" value="1"/>
</dbReference>
<dbReference type="SMART" id="SM00823">
    <property type="entry name" value="PKS_PP"/>
    <property type="match status" value="1"/>
</dbReference>
<dbReference type="SUPFAM" id="SSF47336">
    <property type="entry name" value="ACP-like"/>
    <property type="match status" value="1"/>
</dbReference>
<dbReference type="SUPFAM" id="SSF52151">
    <property type="entry name" value="FabD/lysophospholipase-like"/>
    <property type="match status" value="1"/>
</dbReference>
<dbReference type="SUPFAM" id="SSF51735">
    <property type="entry name" value="NAD(P)-binding Rossmann-fold domains"/>
    <property type="match status" value="1"/>
</dbReference>
<dbReference type="SUPFAM" id="SSF55048">
    <property type="entry name" value="Probable ACP-binding domain of malonyl-CoA ACP transacylase"/>
    <property type="match status" value="1"/>
</dbReference>
<dbReference type="SUPFAM" id="SSF53335">
    <property type="entry name" value="S-adenosyl-L-methionine-dependent methyltransferases"/>
    <property type="match status" value="1"/>
</dbReference>
<dbReference type="SUPFAM" id="SSF53901">
    <property type="entry name" value="Thiolase-like"/>
    <property type="match status" value="1"/>
</dbReference>
<dbReference type="PROSITE" id="PS50075">
    <property type="entry name" value="CARRIER"/>
    <property type="match status" value="1"/>
</dbReference>
<dbReference type="PROSITE" id="PS00606">
    <property type="entry name" value="KS3_1"/>
    <property type="match status" value="1"/>
</dbReference>
<dbReference type="PROSITE" id="PS52004">
    <property type="entry name" value="KS3_2"/>
    <property type="match status" value="1"/>
</dbReference>
<dbReference type="PROSITE" id="PS00012">
    <property type="entry name" value="PHOSPHOPANTETHEINE"/>
    <property type="match status" value="1"/>
</dbReference>
<dbReference type="PROSITE" id="PS52019">
    <property type="entry name" value="PKS_MFAS_DH"/>
    <property type="match status" value="1"/>
</dbReference>
<proteinExistence type="evidence at protein level"/>
<organism>
    <name type="scientific">Monascus purpureus</name>
    <name type="common">Red mold</name>
    <name type="synonym">Monascus anka</name>
    <dbReference type="NCBI Taxonomy" id="5098"/>
    <lineage>
        <taxon>Eukaryota</taxon>
        <taxon>Fungi</taxon>
        <taxon>Dikarya</taxon>
        <taxon>Ascomycota</taxon>
        <taxon>Pezizomycotina</taxon>
        <taxon>Eurotiomycetes</taxon>
        <taxon>Eurotiomycetidae</taxon>
        <taxon>Eurotiales</taxon>
        <taxon>Aspergillaceae</taxon>
        <taxon>Monascus</taxon>
    </lineage>
</organism>
<evidence type="ECO:0000250" key="1">
    <source>
        <dbReference type="UniProtKB" id="A0A0K0MCJ4"/>
    </source>
</evidence>
<evidence type="ECO:0000250" key="2">
    <source>
        <dbReference type="UniProtKB" id="A0A161CKG1"/>
    </source>
</evidence>
<evidence type="ECO:0000255" key="3"/>
<evidence type="ECO:0000255" key="4">
    <source>
        <dbReference type="PROSITE-ProRule" id="PRU00258"/>
    </source>
</evidence>
<evidence type="ECO:0000255" key="5">
    <source>
        <dbReference type="PROSITE-ProRule" id="PRU01348"/>
    </source>
</evidence>
<evidence type="ECO:0000255" key="6">
    <source>
        <dbReference type="PROSITE-ProRule" id="PRU01363"/>
    </source>
</evidence>
<evidence type="ECO:0000256" key="7">
    <source>
        <dbReference type="SAM" id="MobiDB-lite"/>
    </source>
</evidence>
<evidence type="ECO:0000269" key="8">
    <source>
    </source>
</evidence>
<evidence type="ECO:0000269" key="9">
    <source>
    </source>
</evidence>
<evidence type="ECO:0000269" key="10">
    <source>
    </source>
</evidence>
<evidence type="ECO:0000269" key="11">
    <source>
    </source>
</evidence>
<evidence type="ECO:0000269" key="12">
    <source>
    </source>
</evidence>
<evidence type="ECO:0000303" key="13">
    <source>
    </source>
</evidence>
<evidence type="ECO:0000305" key="14">
    <source>
    </source>
</evidence>
<evidence type="ECO:0000305" key="15">
    <source>
    </source>
</evidence>
<evidence type="ECO:0007829" key="16">
    <source>
        <dbReference type="PDB" id="5MPT"/>
    </source>
</evidence>
<reference key="1">
    <citation type="journal article" date="2005" name="Appl. Environ. Microbiol.">
        <title>Polyketide synthase gene responsible for citrinin biosynthesis in Monascus purpureus.</title>
        <authorList>
            <person name="Shimizu T."/>
            <person name="Kinoshita H."/>
            <person name="Ishihara S."/>
            <person name="Sakai K."/>
            <person name="Nagai S."/>
            <person name="Nihira T."/>
        </authorList>
    </citation>
    <scope>NUCLEOTIDE SEQUENCE [GENOMIC DNA]</scope>
    <scope>DISRUPTION PHENOTYPE</scope>
    <scope>FUNCTION</scope>
</reference>
<reference key="2">
    <citation type="journal article" date="2008" name="J. Agric. Food Chem.">
        <title>Exploring the distribution of citrinin biosynthesis related genes among Monascus species.</title>
        <authorList>
            <person name="Chen Y.P."/>
            <person name="Tseng C.P."/>
            <person name="Chien I.L."/>
            <person name="Wang W.Y."/>
            <person name="Liaw L.L."/>
            <person name="Yuan G.F."/>
        </authorList>
    </citation>
    <scope>FUNCTION</scope>
</reference>
<reference key="3">
    <citation type="journal article" date="2008" name="J. Biosci. Bioeng.">
        <title>Construction of a citrinin gene cluster expression system in heterologous Aspergillus oryzae.</title>
        <authorList>
            <person name="Sakai K."/>
            <person name="Kinoshita H."/>
            <person name="Shimizu T."/>
            <person name="Nihira T."/>
        </authorList>
    </citation>
    <scope>FUNCTION</scope>
</reference>
<reference key="4">
    <citation type="journal article" date="2017" name="J. Biotechnol.">
        <title>Methylotrophic yeast Pichia pastoris as a chassis organism for polyketide synthesis via the full citrinin biosynthetic pathway.</title>
        <authorList>
            <person name="Xue Y."/>
            <person name="Kong C."/>
            <person name="Shen W."/>
            <person name="Bai C."/>
            <person name="Ren Y."/>
            <person name="Zhou X."/>
            <person name="Zhang Y."/>
            <person name="Cai M."/>
        </authorList>
    </citation>
    <scope>FUNCTION</scope>
    <scope>CATALYTIC ACTIVITY</scope>
    <scope>PATHWAY</scope>
</reference>
<reference key="5">
    <citation type="journal article" date="2017" name="Cell Chem. Biol.">
        <title>Functional and structural analysis of programmed C-methylation in the biosynthesis of the fungal polyketide citrinin.</title>
        <authorList>
            <person name="Storm P.A."/>
            <person name="Herbst D.A."/>
            <person name="Maier T."/>
            <person name="Townsend C.A."/>
        </authorList>
    </citation>
    <scope>X-RAY CRYSTALLOGRAPHY (1.65 ANGSTROMS) OF 1785-2163 IN COMPLEX WITH COSUBSTRATE</scope>
    <scope>GENE MODEL REVISION</scope>
    <scope>DOMAIN</scope>
    <scope>FUNCTION</scope>
    <scope>CATALYTIC ACTIVITY</scope>
    <scope>ACTIVE SITE</scope>
    <scope>MUTAGENESIS OF TYR-1955 AND HIS-2067</scope>
</reference>
<keyword id="KW-0002">3D-structure</keyword>
<keyword id="KW-0012">Acyltransferase</keyword>
<keyword id="KW-0489">Methyltransferase</keyword>
<keyword id="KW-0511">Multifunctional enzyme</keyword>
<keyword id="KW-0521">NADP</keyword>
<keyword id="KW-0596">Phosphopantetheine</keyword>
<keyword id="KW-0597">Phosphoprotein</keyword>
<keyword id="KW-0808">Transferase</keyword>
<gene>
    <name evidence="13" type="primary">pksCT</name>
</gene>
<comment type="function">
    <text evidence="2 8 9 10 11 12">Non-reducing polyketide synthase; part of the gene cluster that mediates the biosynthesis of the mycotoxin citrinin, a hepato-nephrotoxic compound to humans due to inhibition of respiration complex III (PubMed:16000748, PubMed:19012408, PubMed:19111642, PubMed:27913218, PubMed:28238725). The pathway begins with the synthesis of a keto-aldehyde intermediate by the citrinin PKS (pksCT) from successive condensations of 4 malonyl-CoA units, presumably with a simple acetyl-CoA starter unit (PubMed:28238725). Release of the keto-aldehyde intermediate is consistent with the presence of the C-terminal reductive release domain (PubMed:28238725). Mp11 collaborates with pksCT by catalyzing the hydrolysis of ACP-bound acyl intermediates to free the ACP from stalled intermediates (By similarity). Mpl2 then catalyzes the oxidation of the C-12 methyl of the ketone intermediate to an alcohol intermediate which is further oxidized by the oxidoreductase mpl7 to produce a bisaldehyde intermediate (PubMed:27913218). The fourth catalytic step is catalyzed by the mpl4 aldehyde dehydrogenase (PubMed:27913218). The final transformation is the reduction of C-3 by mpl6 to provide the chemically stable citrinin nucleus (PubMed:27913218).</text>
</comment>
<comment type="cofactor">
    <cofactor evidence="3">
        <name>pantetheine 4'-phosphate</name>
        <dbReference type="ChEBI" id="CHEBI:47942"/>
    </cofactor>
    <text evidence="3">Binds 1 phosphopantetheine covalently.</text>
</comment>
<comment type="pathway">
    <text evidence="8 12">Mycotoxin biosynthesis.</text>
</comment>
<comment type="domain">
    <text evidence="14 15">Multidomain protein; including an N-terminal starter unit:ACP transacylase (SAT) domain, a beta-ketoacyl synthase (KS) domain, a malonyl-CoA:ACP transacylase (MAT) domain, a product template domain, a acyl carrier protein (ACP) domain, a methyltransferase domain (CMeT) and a reductive NADPH-binding domain that is required for NADPH-dependent product release (PubMed:16000748, PubMed:28238725). The CMet adds methyl groups as check-point tags, which are recognized by KS, such that a lack of methylation causes release of immature products at the triketide stage (PubMed:28238725).</text>
</comment>
<comment type="disruption phenotype">
    <text evidence="8">Abolishes the production of citrinin (PubMed:16000748).</text>
</comment>
<comment type="sequence caution" evidence="12">
    <conflict type="erroneous gene model prediction">
        <sequence resource="EMBL-CDS" id="BAD44749"/>
    </conflict>
</comment>
<name>CITS_MONPU</name>
<accession>Q65Z23</accession>
<feature type="chain" id="PRO_0000440312" description="Citrinin polyketide synthase">
    <location>
        <begin position="1"/>
        <end position="2593"/>
    </location>
</feature>
<feature type="domain" description="Ketosynthase family 3 (KS3)" evidence="5">
    <location>
        <begin position="391"/>
        <end position="806"/>
    </location>
</feature>
<feature type="domain" description="PKS/mFAS DH" evidence="6">
    <location>
        <begin position="1291"/>
        <end position="1603"/>
    </location>
</feature>
<feature type="domain" description="Carrier" evidence="4">
    <location>
        <begin position="1661"/>
        <end position="1738"/>
    </location>
</feature>
<feature type="region of interest" description="N-terminal acylcarrier protein transacylase domain (SAT)" evidence="1">
    <location>
        <begin position="70"/>
        <end position="224"/>
    </location>
</feature>
<feature type="region of interest" description="Malonyl-CoA:ACP transacylase (MAT) domain" evidence="3">
    <location>
        <begin position="906"/>
        <end position="1191"/>
    </location>
</feature>
<feature type="region of interest" description="N-terminal hotdog fold" evidence="6">
    <location>
        <begin position="1291"/>
        <end position="1424"/>
    </location>
</feature>
<feature type="region of interest" description="Product template (PT) domain" evidence="3">
    <location>
        <begin position="1322"/>
        <end position="1601"/>
    </location>
</feature>
<feature type="region of interest" description="C-terminal hotdog fold" evidence="6">
    <location>
        <begin position="1451"/>
        <end position="1603"/>
    </location>
</feature>
<feature type="region of interest" description="Disordered" evidence="7">
    <location>
        <begin position="1636"/>
        <end position="1662"/>
    </location>
</feature>
<feature type="region of interest" description="Methyltransferase (CMeT) domain" evidence="3">
    <location>
        <begin position="1960"/>
        <end position="2134"/>
    </location>
</feature>
<feature type="region of interest" description="NADPH-binding (R) domain" evidence="3">
    <location>
        <begin position="2215"/>
        <end position="2459"/>
    </location>
</feature>
<feature type="active site" description="Nucleophile; for transacylase activity" evidence="1">
    <location>
        <position position="139"/>
    </location>
</feature>
<feature type="active site" description="Proton donor/acceptor; for transacylase activity" evidence="1">
    <location>
        <position position="258"/>
    </location>
</feature>
<feature type="active site" description="For beta-ketoacyl synthase activity" evidence="5">
    <location>
        <position position="555"/>
    </location>
</feature>
<feature type="active site" description="For beta-ketoacyl synthase activity" evidence="5">
    <location>
        <position position="690"/>
    </location>
</feature>
<feature type="active site" description="For beta-ketoacyl synthase activity" evidence="5">
    <location>
        <position position="729"/>
    </location>
</feature>
<feature type="active site" description="Proton acceptor; for dehydratase activity" evidence="6">
    <location>
        <position position="1326"/>
    </location>
</feature>
<feature type="active site" description="Proton donor; for dehydratase activity" evidence="6">
    <location>
        <position position="1508"/>
    </location>
</feature>
<feature type="active site" description="For methyltransferase activity" evidence="12">
    <location>
        <position position="1955"/>
    </location>
</feature>
<feature type="active site" description="For methyltransferase activity" evidence="12">
    <location>
        <position position="2067"/>
    </location>
</feature>
<feature type="active site" description="For methyltransferase activity" evidence="12">
    <location>
        <position position="2093"/>
    </location>
</feature>
<feature type="modified residue" description="O-(pantetheine 4'-phosphoryl)serine" evidence="4">
    <location>
        <position position="1689"/>
    </location>
</feature>
<feature type="mutagenesis site" description="Affects the production of tetra- and pentaketide chains." evidence="12">
    <original>Y</original>
    <variation>A</variation>
    <variation>F</variation>
    <location>
        <position position="1955"/>
    </location>
</feature>
<feature type="mutagenesis site" description="Blocks the elongation of the polyketide backbone at the triketide step, matching the profile of the minimal PKS without the CMeT domain." evidence="12">
    <original>H</original>
    <variation>A</variation>
    <location>
        <position position="2067"/>
    </location>
</feature>
<feature type="mutagenesis site" description="Leads to the accumulation of a major triketide product in addition to smaller amounts of two different other triketides identical by mass, but singly methylated at C-4 and C-2, respectively." evidence="12">
    <original>H</original>
    <variation>A</variation>
    <location>
        <position position="2067"/>
    </location>
</feature>
<feature type="helix" evidence="16">
    <location>
        <begin position="1792"/>
        <end position="1804"/>
    </location>
</feature>
<feature type="helix" evidence="16">
    <location>
        <begin position="1806"/>
        <end position="1812"/>
    </location>
</feature>
<feature type="helix" evidence="16">
    <location>
        <begin position="1818"/>
        <end position="1821"/>
    </location>
</feature>
<feature type="helix" evidence="16">
    <location>
        <begin position="1823"/>
        <end position="1840"/>
    </location>
</feature>
<feature type="turn" evidence="16">
    <location>
        <begin position="1845"/>
        <end position="1847"/>
    </location>
</feature>
<feature type="helix" evidence="16">
    <location>
        <begin position="1861"/>
        <end position="1863"/>
    </location>
</feature>
<feature type="helix" evidence="16">
    <location>
        <begin position="1864"/>
        <end position="1876"/>
    </location>
</feature>
<feature type="strand" evidence="16">
    <location>
        <begin position="1879"/>
        <end position="1883"/>
    </location>
</feature>
<feature type="strand" evidence="16">
    <location>
        <begin position="1886"/>
        <end position="1889"/>
    </location>
</feature>
<feature type="helix" evidence="16">
    <location>
        <begin position="1899"/>
        <end position="1909"/>
    </location>
</feature>
<feature type="helix" evidence="16">
    <location>
        <begin position="1911"/>
        <end position="1913"/>
    </location>
</feature>
<feature type="helix" evidence="16">
    <location>
        <begin position="1914"/>
        <end position="1924"/>
    </location>
</feature>
<feature type="helix" evidence="16">
    <location>
        <begin position="1927"/>
        <end position="1931"/>
    </location>
</feature>
<feature type="helix" evidence="16">
    <location>
        <begin position="1937"/>
        <end position="1942"/>
    </location>
</feature>
<feature type="helix" evidence="16">
    <location>
        <begin position="1945"/>
        <end position="1956"/>
    </location>
</feature>
<feature type="helix" evidence="16">
    <location>
        <begin position="1959"/>
        <end position="1976"/>
    </location>
</feature>
<feature type="strand" evidence="16">
    <location>
        <begin position="1986"/>
        <end position="1992"/>
    </location>
</feature>
<feature type="turn" evidence="16">
    <location>
        <begin position="1994"/>
        <end position="1998"/>
    </location>
</feature>
<feature type="helix" evidence="16">
    <location>
        <begin position="1999"/>
        <end position="2009"/>
    </location>
</feature>
<feature type="strand" evidence="16">
    <location>
        <begin position="2013"/>
        <end position="2020"/>
    </location>
</feature>
<feature type="helix" evidence="16">
    <location>
        <begin position="2022"/>
        <end position="2031"/>
    </location>
</feature>
<feature type="turn" evidence="16">
    <location>
        <begin position="2032"/>
        <end position="2034"/>
    </location>
</feature>
<feature type="strand" evidence="16">
    <location>
        <begin position="2038"/>
        <end position="2042"/>
    </location>
</feature>
<feature type="helix" evidence="16">
    <location>
        <begin position="2051"/>
        <end position="2053"/>
    </location>
</feature>
<feature type="strand" evidence="16">
    <location>
        <begin position="2057"/>
        <end position="2064"/>
    </location>
</feature>
<feature type="helix" evidence="16">
    <location>
        <begin position="2066"/>
        <end position="2068"/>
    </location>
</feature>
<feature type="helix" evidence="16">
    <location>
        <begin position="2072"/>
        <end position="2082"/>
    </location>
</feature>
<feature type="strand" evidence="16">
    <location>
        <begin position="2083"/>
        <end position="2094"/>
    </location>
</feature>
<feature type="helix" evidence="16">
    <location>
        <begin position="2099"/>
        <end position="2105"/>
    </location>
</feature>
<feature type="helix" evidence="16">
    <location>
        <begin position="2109"/>
        <end position="2111"/>
    </location>
</feature>
<feature type="strand" evidence="16">
    <location>
        <begin position="2119"/>
        <end position="2121"/>
    </location>
</feature>
<feature type="helix" evidence="16">
    <location>
        <begin position="2125"/>
        <end position="2134"/>
    </location>
</feature>
<feature type="strand" evidence="16">
    <location>
        <begin position="2139"/>
        <end position="2142"/>
    </location>
</feature>
<feature type="helix" evidence="16">
    <location>
        <begin position="2148"/>
        <end position="2151"/>
    </location>
</feature>
<feature type="strand" evidence="16">
    <location>
        <begin position="2153"/>
        <end position="2161"/>
    </location>
</feature>
<protein>
    <recommendedName>
        <fullName evidence="13">Citrinin polyketide synthase</fullName>
        <ecNumber evidence="11 12">2.3.1.-</ecNumber>
    </recommendedName>
    <alternativeName>
        <fullName evidence="13">Non-reducing polyketide synthase citS</fullName>
    </alternativeName>
</protein>